<proteinExistence type="inferred from homology"/>
<feature type="chain" id="PRO_0000333598" description="U6 snRNA-associated Sm-like protein LSm6">
    <location>
        <begin position="1"/>
        <end position="99"/>
    </location>
</feature>
<feature type="domain" description="Sm" evidence="2">
    <location>
        <begin position="27"/>
        <end position="99"/>
    </location>
</feature>
<feature type="region of interest" description="Disordered" evidence="3">
    <location>
        <begin position="1"/>
        <end position="30"/>
    </location>
</feature>
<feature type="compositionally biased region" description="Pro residues" evidence="3">
    <location>
        <begin position="1"/>
        <end position="21"/>
    </location>
</feature>
<reference key="1">
    <citation type="journal article" date="2008" name="Nature">
        <title>The genome of Laccaria bicolor provides insights into mycorrhizal symbiosis.</title>
        <authorList>
            <person name="Martin F."/>
            <person name="Aerts A."/>
            <person name="Ahren D."/>
            <person name="Brun A."/>
            <person name="Danchin E.G.J."/>
            <person name="Duchaussoy F."/>
            <person name="Gibon J."/>
            <person name="Kohler A."/>
            <person name="Lindquist E."/>
            <person name="Pereda V."/>
            <person name="Salamov A."/>
            <person name="Shapiro H.J."/>
            <person name="Wuyts J."/>
            <person name="Blaudez D."/>
            <person name="Buee M."/>
            <person name="Brokstein P."/>
            <person name="Canbaeck B."/>
            <person name="Cohen D."/>
            <person name="Courty P.E."/>
            <person name="Coutinho P.M."/>
            <person name="Delaruelle C."/>
            <person name="Detter J.C."/>
            <person name="Deveau A."/>
            <person name="DiFazio S."/>
            <person name="Duplessis S."/>
            <person name="Fraissinet-Tachet L."/>
            <person name="Lucic E."/>
            <person name="Frey-Klett P."/>
            <person name="Fourrey C."/>
            <person name="Feussner I."/>
            <person name="Gay G."/>
            <person name="Grimwood J."/>
            <person name="Hoegger P.J."/>
            <person name="Jain P."/>
            <person name="Kilaru S."/>
            <person name="Labbe J."/>
            <person name="Lin Y.C."/>
            <person name="Legue V."/>
            <person name="Le Tacon F."/>
            <person name="Marmeisse R."/>
            <person name="Melayah D."/>
            <person name="Montanini B."/>
            <person name="Muratet M."/>
            <person name="Nehls U."/>
            <person name="Niculita-Hirzel H."/>
            <person name="Oudot-Le Secq M.P."/>
            <person name="Peter M."/>
            <person name="Quesneville H."/>
            <person name="Rajashekar B."/>
            <person name="Reich M."/>
            <person name="Rouhier N."/>
            <person name="Schmutz J."/>
            <person name="Yin T."/>
            <person name="Chalot M."/>
            <person name="Henrissat B."/>
            <person name="Kuees U."/>
            <person name="Lucas S."/>
            <person name="Van de Peer Y."/>
            <person name="Podila G.K."/>
            <person name="Polle A."/>
            <person name="Pukkila P.J."/>
            <person name="Richardson P.M."/>
            <person name="Rouze P."/>
            <person name="Sanders I.R."/>
            <person name="Stajich J.E."/>
            <person name="Tunlid A."/>
            <person name="Tuskan G."/>
            <person name="Grigoriev I.V."/>
        </authorList>
    </citation>
    <scope>NUCLEOTIDE SEQUENCE [LARGE SCALE GENOMIC DNA]</scope>
    <source>
        <strain>S238N-H82 / ATCC MYA-4686</strain>
    </source>
</reference>
<protein>
    <recommendedName>
        <fullName>U6 snRNA-associated Sm-like protein LSm6</fullName>
    </recommendedName>
</protein>
<accession>B0DWN3</accession>
<gene>
    <name type="primary">LSM6</name>
    <name type="ORF">LACBIDRAFT_180652</name>
</gene>
<comment type="function">
    <text evidence="1">Component of LSm protein complexes, which are involved in RNA processing and may function in a chaperone-like manner, facilitating the efficient association of RNA processing factors with their substrates. Component of the cytoplasmic LSM1-LSM7 complex, which is thought to be involved in mRNA degradation by activating the decapping step in the 5'-to-3' mRNA decay pathway. Component of the nuclear LSM2-LSM8 complex, which is involved in splicing of nuclear mRNAs. LSM2-LSM8 associates with multiple snRNP complexes containing the U6 snRNA (U4/U6 di-snRNP, spliceosomal U4/U6.U5 tri-snRNP, and free U6 snRNP). It binds directly to the 3'-terminal U-tract of U6 snRNA and plays a role in the biogenesis and stability of the U6 snRNP and U4/U6 snRNP complexes. LSM2-LSM8 probably also is involved degradation of nuclear pre-mRNA by targeting them for decapping, and in processing of pre-tRNAs, pre-rRNAs and U3 snoRNA (By similarity).</text>
</comment>
<comment type="subunit">
    <text evidence="1">Component of the heptameric LSM1-LSM7 complex, which consists of LSM1, LSM2, LSM3, LSM4, LSM5, LSM6 and LSM7. Component of the heptameric LSM2-LSM8 complex, which consists of LSM2, LSM3, LSM4, LSM5, LSM6, LSM7 and LSM8. The LSm subunits form a seven-membered ring structure with a doughnut shape (By similarity).</text>
</comment>
<comment type="subcellular location">
    <subcellularLocation>
        <location evidence="1">Cytoplasm</location>
    </subcellularLocation>
    <subcellularLocation>
        <location evidence="1">Nucleus</location>
    </subcellularLocation>
</comment>
<comment type="similarity">
    <text evidence="4">Belongs to the snRNP Sm proteins family. SmF/LSm6 subfamily.</text>
</comment>
<evidence type="ECO:0000250" key="1"/>
<evidence type="ECO:0000255" key="2">
    <source>
        <dbReference type="PROSITE-ProRule" id="PRU01346"/>
    </source>
</evidence>
<evidence type="ECO:0000256" key="3">
    <source>
        <dbReference type="SAM" id="MobiDB-lite"/>
    </source>
</evidence>
<evidence type="ECO:0000305" key="4"/>
<organism>
    <name type="scientific">Laccaria bicolor (strain S238N-H82 / ATCC MYA-4686)</name>
    <name type="common">Bicoloured deceiver</name>
    <name type="synonym">Laccaria laccata var. bicolor</name>
    <dbReference type="NCBI Taxonomy" id="486041"/>
    <lineage>
        <taxon>Eukaryota</taxon>
        <taxon>Fungi</taxon>
        <taxon>Dikarya</taxon>
        <taxon>Basidiomycota</taxon>
        <taxon>Agaricomycotina</taxon>
        <taxon>Agaricomycetes</taxon>
        <taxon>Agaricomycetidae</taxon>
        <taxon>Agaricales</taxon>
        <taxon>Agaricineae</taxon>
        <taxon>Hydnangiaceae</taxon>
        <taxon>Laccaria</taxon>
    </lineage>
</organism>
<dbReference type="EMBL" id="DS547144">
    <property type="protein sequence ID" value="EDR00966.1"/>
    <property type="molecule type" value="Genomic_DNA"/>
</dbReference>
<dbReference type="RefSeq" id="XP_001888361.1">
    <property type="nucleotide sequence ID" value="XM_001888326.1"/>
</dbReference>
<dbReference type="SMR" id="B0DWN3"/>
<dbReference type="FunCoup" id="B0DWN3">
    <property type="interactions" value="460"/>
</dbReference>
<dbReference type="STRING" id="486041.B0DWN3"/>
<dbReference type="GeneID" id="6084052"/>
<dbReference type="KEGG" id="lbc:LACBIDRAFT_180652"/>
<dbReference type="HOGENOM" id="CLU_076902_7_2_1"/>
<dbReference type="InParanoid" id="B0DWN3"/>
<dbReference type="OrthoDB" id="268799at2759"/>
<dbReference type="Proteomes" id="UP000001194">
    <property type="component" value="Unassembled WGS sequence"/>
</dbReference>
<dbReference type="GO" id="GO:0005730">
    <property type="term" value="C:nucleolus"/>
    <property type="evidence" value="ECO:0007669"/>
    <property type="project" value="TreeGrafter"/>
</dbReference>
<dbReference type="GO" id="GO:0000932">
    <property type="term" value="C:P-body"/>
    <property type="evidence" value="ECO:0007669"/>
    <property type="project" value="TreeGrafter"/>
</dbReference>
<dbReference type="GO" id="GO:0005732">
    <property type="term" value="C:sno(s)RNA-containing ribonucleoprotein complex"/>
    <property type="evidence" value="ECO:0007669"/>
    <property type="project" value="TreeGrafter"/>
</dbReference>
<dbReference type="GO" id="GO:0005681">
    <property type="term" value="C:spliceosomal complex"/>
    <property type="evidence" value="ECO:0007669"/>
    <property type="project" value="UniProtKB-KW"/>
</dbReference>
<dbReference type="GO" id="GO:0046540">
    <property type="term" value="C:U4/U6 x U5 tri-snRNP complex"/>
    <property type="evidence" value="ECO:0007669"/>
    <property type="project" value="TreeGrafter"/>
</dbReference>
<dbReference type="GO" id="GO:0005688">
    <property type="term" value="C:U6 snRNP"/>
    <property type="evidence" value="ECO:0007669"/>
    <property type="project" value="TreeGrafter"/>
</dbReference>
<dbReference type="GO" id="GO:0003723">
    <property type="term" value="F:RNA binding"/>
    <property type="evidence" value="ECO:0007669"/>
    <property type="project" value="UniProtKB-KW"/>
</dbReference>
<dbReference type="GO" id="GO:0030490">
    <property type="term" value="P:maturation of SSU-rRNA"/>
    <property type="evidence" value="ECO:0007669"/>
    <property type="project" value="TreeGrafter"/>
</dbReference>
<dbReference type="GO" id="GO:0000398">
    <property type="term" value="P:mRNA splicing, via spliceosome"/>
    <property type="evidence" value="ECO:0007669"/>
    <property type="project" value="InterPro"/>
</dbReference>
<dbReference type="GO" id="GO:0008033">
    <property type="term" value="P:tRNA processing"/>
    <property type="evidence" value="ECO:0007669"/>
    <property type="project" value="UniProtKB-KW"/>
</dbReference>
<dbReference type="CDD" id="cd01726">
    <property type="entry name" value="LSm6"/>
    <property type="match status" value="1"/>
</dbReference>
<dbReference type="FunFam" id="2.30.30.100:FF:000044">
    <property type="entry name" value="Probable U6 snRNA-associated Sm-like protein LSm6"/>
    <property type="match status" value="1"/>
</dbReference>
<dbReference type="Gene3D" id="2.30.30.100">
    <property type="match status" value="1"/>
</dbReference>
<dbReference type="InterPro" id="IPR016487">
    <property type="entry name" value="Lsm6/sSmF"/>
</dbReference>
<dbReference type="InterPro" id="IPR010920">
    <property type="entry name" value="LSM_dom_sf"/>
</dbReference>
<dbReference type="InterPro" id="IPR047575">
    <property type="entry name" value="Sm"/>
</dbReference>
<dbReference type="InterPro" id="IPR001163">
    <property type="entry name" value="Sm_dom_euk/arc"/>
</dbReference>
<dbReference type="PANTHER" id="PTHR11021">
    <property type="entry name" value="SMALL NUCLEAR RIBONUCLEOPROTEIN F SNRNP-F"/>
    <property type="match status" value="1"/>
</dbReference>
<dbReference type="PANTHER" id="PTHR11021:SF1">
    <property type="entry name" value="U6 SNRNA-ASSOCIATED SM-LIKE PROTEIN LSM6"/>
    <property type="match status" value="1"/>
</dbReference>
<dbReference type="Pfam" id="PF01423">
    <property type="entry name" value="LSM"/>
    <property type="match status" value="1"/>
</dbReference>
<dbReference type="SMART" id="SM00651">
    <property type="entry name" value="Sm"/>
    <property type="match status" value="1"/>
</dbReference>
<dbReference type="SUPFAM" id="SSF50182">
    <property type="entry name" value="Sm-like ribonucleoproteins"/>
    <property type="match status" value="1"/>
</dbReference>
<dbReference type="PROSITE" id="PS52002">
    <property type="entry name" value="SM"/>
    <property type="match status" value="1"/>
</dbReference>
<sequence>MDNSPPPPSNESPPPQPPPPQATHTGSPTDFLKGVVGKRVIVRLTSGVDYRGLLSCLDGYMNIALEQTEEHVNGVVTNRYGDAFIRGNNVLYISAAEPI</sequence>
<keyword id="KW-0963">Cytoplasm</keyword>
<keyword id="KW-0507">mRNA processing</keyword>
<keyword id="KW-0508">mRNA splicing</keyword>
<keyword id="KW-0539">Nucleus</keyword>
<keyword id="KW-1185">Reference proteome</keyword>
<keyword id="KW-0687">Ribonucleoprotein</keyword>
<keyword id="KW-0694">RNA-binding</keyword>
<keyword id="KW-0698">rRNA processing</keyword>
<keyword id="KW-0747">Spliceosome</keyword>
<keyword id="KW-0819">tRNA processing</keyword>
<name>LSM6_LACBS</name>